<reference key="1">
    <citation type="journal article" date="2002" name="Proc. Natl. Acad. Sci. U.S.A.">
        <title>The genome sequence of the facultative intracellular pathogen Brucella melitensis.</title>
        <authorList>
            <person name="DelVecchio V.G."/>
            <person name="Kapatral V."/>
            <person name="Redkar R.J."/>
            <person name="Patra G."/>
            <person name="Mujer C."/>
            <person name="Los T."/>
            <person name="Ivanova N."/>
            <person name="Anderson I."/>
            <person name="Bhattacharyya A."/>
            <person name="Lykidis A."/>
            <person name="Reznik G."/>
            <person name="Jablonski L."/>
            <person name="Larsen N."/>
            <person name="D'Souza M."/>
            <person name="Bernal A."/>
            <person name="Mazur M."/>
            <person name="Goltsman E."/>
            <person name="Selkov E."/>
            <person name="Elzer P.H."/>
            <person name="Hagius S."/>
            <person name="O'Callaghan D."/>
            <person name="Letesson J.-J."/>
            <person name="Haselkorn R."/>
            <person name="Kyrpides N.C."/>
            <person name="Overbeek R."/>
        </authorList>
    </citation>
    <scope>NUCLEOTIDE SEQUENCE [LARGE SCALE GENOMIC DNA]</scope>
    <source>
        <strain>ATCC 23456 / CCUG 17765 / NCTC 10094 / 16M</strain>
    </source>
</reference>
<comment type="function">
    <text evidence="1">Required for maturation of urease via the functional incorporation of the urease nickel metallocenter.</text>
</comment>
<comment type="subunit">
    <text evidence="1">UreD, UreF and UreG form a complex that acts as a GTP-hydrolysis-dependent molecular chaperone, activating the urease apoprotein by helping to assemble the nickel containing metallocenter of UreC. The UreE protein probably delivers the nickel.</text>
</comment>
<comment type="subcellular location">
    <subcellularLocation>
        <location evidence="1">Cytoplasm</location>
    </subcellularLocation>
</comment>
<comment type="similarity">
    <text evidence="1">Belongs to the UreD family.</text>
</comment>
<keyword id="KW-0143">Chaperone</keyword>
<keyword id="KW-0963">Cytoplasm</keyword>
<keyword id="KW-0996">Nickel insertion</keyword>
<proteinExistence type="inferred from homology"/>
<protein>
    <recommendedName>
        <fullName evidence="1">Urease accessory protein UreD 2</fullName>
    </recommendedName>
</protein>
<sequence>MLGKARELANYQDEPEQLPTGSFGKNAFLRLGFERRPERTVLATLHRRAPLIVQQALYWDEGMPTLPCVSIISNAGGILQGDRYAIEIDLEPDTQAHVTTQSATRIQEMDANFATQTQTITLGANSYLEYIPHPIIPHKHSRFVQQTEVTIHPTATLIYSEVLMAGRKYYGTGELFHYDLFSSKFHAAHTDGTSLFTEKFIVEPARGNVSRLGAMGSFHVFGNLILLTPKTHADRLFETIDPVFDMDEGIAWGASRLPNDAGLLFKVLGMESAPVRAAIRKIWEAARQEVTGASLPENFLWA</sequence>
<gene>
    <name evidence="1" type="primary">ureD2</name>
    <name type="ordered locus">BMEI0643</name>
</gene>
<organism>
    <name type="scientific">Brucella melitensis biotype 1 (strain ATCC 23456 / CCUG 17765 / NCTC 10094 / 16M)</name>
    <dbReference type="NCBI Taxonomy" id="224914"/>
    <lineage>
        <taxon>Bacteria</taxon>
        <taxon>Pseudomonadati</taxon>
        <taxon>Pseudomonadota</taxon>
        <taxon>Alphaproteobacteria</taxon>
        <taxon>Hyphomicrobiales</taxon>
        <taxon>Brucellaceae</taxon>
        <taxon>Brucella/Ochrobactrum group</taxon>
        <taxon>Brucella</taxon>
    </lineage>
</organism>
<dbReference type="EMBL" id="AE008917">
    <property type="protein sequence ID" value="AAL51824.1"/>
    <property type="molecule type" value="Genomic_DNA"/>
</dbReference>
<dbReference type="PIR" id="AE3332">
    <property type="entry name" value="AE3332"/>
</dbReference>
<dbReference type="RefSeq" id="WP_002967786.1">
    <property type="nucleotide sequence ID" value="NZ_GG703780.1"/>
</dbReference>
<dbReference type="SMR" id="Q8YI02"/>
<dbReference type="KEGG" id="bme:BMEI0643"/>
<dbReference type="KEGG" id="bmel:DK63_784"/>
<dbReference type="PATRIC" id="fig|224914.52.peg.821"/>
<dbReference type="eggNOG" id="COG0829">
    <property type="taxonomic scope" value="Bacteria"/>
</dbReference>
<dbReference type="PhylomeDB" id="Q8YI02"/>
<dbReference type="Proteomes" id="UP000000419">
    <property type="component" value="Chromosome I"/>
</dbReference>
<dbReference type="GO" id="GO:0005737">
    <property type="term" value="C:cytoplasm"/>
    <property type="evidence" value="ECO:0007669"/>
    <property type="project" value="UniProtKB-SubCell"/>
</dbReference>
<dbReference type="GO" id="GO:0016151">
    <property type="term" value="F:nickel cation binding"/>
    <property type="evidence" value="ECO:0007669"/>
    <property type="project" value="UniProtKB-UniRule"/>
</dbReference>
<dbReference type="HAMAP" id="MF_01384">
    <property type="entry name" value="UreD"/>
    <property type="match status" value="1"/>
</dbReference>
<dbReference type="InterPro" id="IPR002669">
    <property type="entry name" value="UreD"/>
</dbReference>
<dbReference type="PANTHER" id="PTHR33643">
    <property type="entry name" value="UREASE ACCESSORY PROTEIN D"/>
    <property type="match status" value="1"/>
</dbReference>
<dbReference type="PANTHER" id="PTHR33643:SF1">
    <property type="entry name" value="UREASE ACCESSORY PROTEIN D"/>
    <property type="match status" value="1"/>
</dbReference>
<dbReference type="Pfam" id="PF01774">
    <property type="entry name" value="UreD"/>
    <property type="match status" value="1"/>
</dbReference>
<accession>Q8YI02</accession>
<name>URED2_BRUME</name>
<evidence type="ECO:0000255" key="1">
    <source>
        <dbReference type="HAMAP-Rule" id="MF_01384"/>
    </source>
</evidence>
<feature type="chain" id="PRO_0000340424" description="Urease accessory protein UreD 2">
    <location>
        <begin position="1"/>
        <end position="302"/>
    </location>
</feature>